<dbReference type="EC" id="6.3.4.4" evidence="2"/>
<dbReference type="EMBL" id="FN554974">
    <property type="protein sequence ID" value="CBH17298.1"/>
    <property type="molecule type" value="Genomic_DNA"/>
</dbReference>
<dbReference type="RefSeq" id="XP_011779562.1">
    <property type="nucleotide sequence ID" value="XM_011781260.1"/>
</dbReference>
<dbReference type="SMR" id="D0A6J7"/>
<dbReference type="GeneID" id="23867404"/>
<dbReference type="KEGG" id="tbg:TbgDal_XI4160"/>
<dbReference type="VEuPathDB" id="TriTrypDB:Tbg972.11.4160"/>
<dbReference type="OrthoDB" id="3204at5690"/>
<dbReference type="UniPathway" id="UPA00075">
    <property type="reaction ID" value="UER00335"/>
</dbReference>
<dbReference type="Proteomes" id="UP000002316">
    <property type="component" value="Chromosome 11"/>
</dbReference>
<dbReference type="GO" id="GO:0005737">
    <property type="term" value="C:cytoplasm"/>
    <property type="evidence" value="ECO:0007669"/>
    <property type="project" value="UniProtKB-SubCell"/>
</dbReference>
<dbReference type="GO" id="GO:0004019">
    <property type="term" value="F:adenylosuccinate synthase activity"/>
    <property type="evidence" value="ECO:0007669"/>
    <property type="project" value="UniProtKB-UniRule"/>
</dbReference>
<dbReference type="GO" id="GO:0005525">
    <property type="term" value="F:GTP binding"/>
    <property type="evidence" value="ECO:0007669"/>
    <property type="project" value="UniProtKB-UniRule"/>
</dbReference>
<dbReference type="GO" id="GO:0000287">
    <property type="term" value="F:magnesium ion binding"/>
    <property type="evidence" value="ECO:0007669"/>
    <property type="project" value="UniProtKB-UniRule"/>
</dbReference>
<dbReference type="GO" id="GO:0044208">
    <property type="term" value="P:'de novo' AMP biosynthetic process"/>
    <property type="evidence" value="ECO:0007669"/>
    <property type="project" value="UniProtKB-UniRule"/>
</dbReference>
<dbReference type="GO" id="GO:0046040">
    <property type="term" value="P:IMP metabolic process"/>
    <property type="evidence" value="ECO:0007669"/>
    <property type="project" value="TreeGrafter"/>
</dbReference>
<dbReference type="FunFam" id="3.90.170.10:FF:000003">
    <property type="entry name" value="Adenylosuccinate synthetase"/>
    <property type="match status" value="1"/>
</dbReference>
<dbReference type="Gene3D" id="3.40.440.10">
    <property type="entry name" value="Adenylosuccinate Synthetase, subunit A, domain 1"/>
    <property type="match status" value="1"/>
</dbReference>
<dbReference type="Gene3D" id="1.10.300.10">
    <property type="entry name" value="Adenylosuccinate Synthetase, subunit A, domain 2"/>
    <property type="match status" value="1"/>
</dbReference>
<dbReference type="Gene3D" id="3.90.170.10">
    <property type="entry name" value="Adenylosuccinate Synthetase, subunit A, domain 3"/>
    <property type="match status" value="1"/>
</dbReference>
<dbReference type="HAMAP" id="MF_00011">
    <property type="entry name" value="Adenylosucc_synth"/>
    <property type="match status" value="1"/>
</dbReference>
<dbReference type="InterPro" id="IPR018220">
    <property type="entry name" value="Adenylosuccin_syn_GTP-bd"/>
</dbReference>
<dbReference type="InterPro" id="IPR042109">
    <property type="entry name" value="Adenylosuccinate_synth_dom1"/>
</dbReference>
<dbReference type="InterPro" id="IPR042110">
    <property type="entry name" value="Adenylosuccinate_synth_dom2"/>
</dbReference>
<dbReference type="InterPro" id="IPR042111">
    <property type="entry name" value="Adenylosuccinate_synth_dom3"/>
</dbReference>
<dbReference type="InterPro" id="IPR001114">
    <property type="entry name" value="Adenylosuccinate_synthetase"/>
</dbReference>
<dbReference type="InterPro" id="IPR027417">
    <property type="entry name" value="P-loop_NTPase"/>
</dbReference>
<dbReference type="PANTHER" id="PTHR11846">
    <property type="entry name" value="ADENYLOSUCCINATE SYNTHETASE"/>
    <property type="match status" value="1"/>
</dbReference>
<dbReference type="PANTHER" id="PTHR11846:SF0">
    <property type="entry name" value="ADENYLOSUCCINATE SYNTHETASE"/>
    <property type="match status" value="1"/>
</dbReference>
<dbReference type="Pfam" id="PF00709">
    <property type="entry name" value="Adenylsucc_synt"/>
    <property type="match status" value="1"/>
</dbReference>
<dbReference type="SMART" id="SM00788">
    <property type="entry name" value="Adenylsucc_synt"/>
    <property type="match status" value="1"/>
</dbReference>
<dbReference type="SUPFAM" id="SSF52540">
    <property type="entry name" value="P-loop containing nucleoside triphosphate hydrolases"/>
    <property type="match status" value="1"/>
</dbReference>
<dbReference type="PROSITE" id="PS01266">
    <property type="entry name" value="ADENYLOSUCCIN_SYN_1"/>
    <property type="match status" value="1"/>
</dbReference>
<organism>
    <name type="scientific">Trypanosoma brucei gambiense (strain MHOM/CI/86/DAL972)</name>
    <dbReference type="NCBI Taxonomy" id="679716"/>
    <lineage>
        <taxon>Eukaryota</taxon>
        <taxon>Discoba</taxon>
        <taxon>Euglenozoa</taxon>
        <taxon>Kinetoplastea</taxon>
        <taxon>Metakinetoplastina</taxon>
        <taxon>Trypanosomatida</taxon>
        <taxon>Trypanosomatidae</taxon>
        <taxon>Trypanosoma</taxon>
    </lineage>
</organism>
<accession>D0A6J7</accession>
<comment type="function">
    <text evidence="1">Plays an important role in the salvage pathway for purine nucleotide biosynthesis. Catalyzes the first committed step in the biosynthesis of AMP from IMP (By similarity).</text>
</comment>
<comment type="catalytic activity">
    <reaction evidence="2">
        <text>IMP + L-aspartate + GTP = N(6)-(1,2-dicarboxyethyl)-AMP + GDP + phosphate + 2 H(+)</text>
        <dbReference type="Rhea" id="RHEA:15753"/>
        <dbReference type="ChEBI" id="CHEBI:15378"/>
        <dbReference type="ChEBI" id="CHEBI:29991"/>
        <dbReference type="ChEBI" id="CHEBI:37565"/>
        <dbReference type="ChEBI" id="CHEBI:43474"/>
        <dbReference type="ChEBI" id="CHEBI:57567"/>
        <dbReference type="ChEBI" id="CHEBI:58053"/>
        <dbReference type="ChEBI" id="CHEBI:58189"/>
        <dbReference type="EC" id="6.3.4.4"/>
    </reaction>
</comment>
<comment type="cofactor">
    <cofactor evidence="2">
        <name>Mg(2+)</name>
        <dbReference type="ChEBI" id="CHEBI:18420"/>
    </cofactor>
    <text evidence="2">Binds 1 Mg(2+) ion per subunit.</text>
</comment>
<comment type="pathway">
    <text evidence="2">Purine metabolism; AMP biosynthesis via de novo pathway; AMP from IMP: step 1/2.</text>
</comment>
<comment type="subunit">
    <text evidence="2">Homodimer.</text>
</comment>
<comment type="subcellular location">
    <subcellularLocation>
        <location evidence="2">Cytoplasm</location>
    </subcellularLocation>
</comment>
<comment type="miscellaneous">
    <text>Parasitic protozoa lack the de novo purine biosynthesis pathway and rely exclusively on the salvage pathway for their purine nucleotide requirements.</text>
</comment>
<comment type="similarity">
    <text evidence="2">Belongs to the adenylosuccinate synthetase family.</text>
</comment>
<reference key="1">
    <citation type="journal article" date="2010" name="PLoS Negl. Trop. Dis.">
        <title>The genome sequence of Trypanosoma brucei gambiense, causative agent of chronic human african trypanosomiasis.</title>
        <authorList>
            <person name="Jackson A.P."/>
            <person name="Sanders M."/>
            <person name="Berry A."/>
            <person name="McQuillan J."/>
            <person name="Aslett M.A."/>
            <person name="Quail M.A."/>
            <person name="Chukualim B."/>
            <person name="Capewell P."/>
            <person name="MacLeod A."/>
            <person name="Melville S.E."/>
            <person name="Gibson W."/>
            <person name="Barry J.D."/>
            <person name="Berriman M."/>
            <person name="Hertz-Fowler C."/>
        </authorList>
    </citation>
    <scope>NUCLEOTIDE SEQUENCE [LARGE SCALE GENOMIC DNA]</scope>
    <source>
        <strain>MHOM/CI/86/DAL972</strain>
    </source>
</reference>
<feature type="chain" id="PRO_0000399306" description="Adenylosuccinate synthetase">
    <location>
        <begin position="1"/>
        <end position="602"/>
    </location>
</feature>
<feature type="active site" description="Proton acceptor" evidence="2">
    <location>
        <position position="75"/>
    </location>
</feature>
<feature type="active site" description="Proton donor" evidence="2">
    <location>
        <position position="105"/>
    </location>
</feature>
<feature type="binding site" evidence="2">
    <location>
        <begin position="74"/>
        <end position="80"/>
    </location>
    <ligand>
        <name>GTP</name>
        <dbReference type="ChEBI" id="CHEBI:37565"/>
    </ligand>
</feature>
<feature type="binding site" description="in other chain" evidence="2">
    <location>
        <begin position="75"/>
        <end position="78"/>
    </location>
    <ligand>
        <name>IMP</name>
        <dbReference type="ChEBI" id="CHEBI:58053"/>
        <note>ligand shared between dimeric partners</note>
    </ligand>
</feature>
<feature type="binding site" evidence="2">
    <location>
        <position position="75"/>
    </location>
    <ligand>
        <name>Mg(2+)</name>
        <dbReference type="ChEBI" id="CHEBI:18420"/>
    </ligand>
</feature>
<feature type="binding site" description="in other chain" evidence="2">
    <location>
        <begin position="102"/>
        <end position="105"/>
    </location>
    <ligand>
        <name>IMP</name>
        <dbReference type="ChEBI" id="CHEBI:58053"/>
        <note>ligand shared between dimeric partners</note>
    </ligand>
</feature>
<feature type="binding site" evidence="2">
    <location>
        <begin position="104"/>
        <end position="106"/>
    </location>
    <ligand>
        <name>GTP</name>
        <dbReference type="ChEBI" id="CHEBI:37565"/>
    </ligand>
</feature>
<feature type="binding site" evidence="2">
    <location>
        <position position="104"/>
    </location>
    <ligand>
        <name>Mg(2+)</name>
        <dbReference type="ChEBI" id="CHEBI:18420"/>
    </ligand>
</feature>
<feature type="binding site" description="in other chain" evidence="2">
    <location>
        <position position="189"/>
    </location>
    <ligand>
        <name>IMP</name>
        <dbReference type="ChEBI" id="CHEBI:58053"/>
        <note>ligand shared between dimeric partners</note>
    </ligand>
</feature>
<feature type="binding site" evidence="2">
    <location>
        <position position="203"/>
    </location>
    <ligand>
        <name>IMP</name>
        <dbReference type="ChEBI" id="CHEBI:58053"/>
        <note>ligand shared between dimeric partners</note>
    </ligand>
</feature>
<feature type="binding site" description="in other chain" evidence="2">
    <location>
        <position position="315"/>
    </location>
    <ligand>
        <name>IMP</name>
        <dbReference type="ChEBI" id="CHEBI:58053"/>
        <note>ligand shared between dimeric partners</note>
    </ligand>
</feature>
<feature type="binding site" description="in other chain" evidence="2">
    <location>
        <position position="331"/>
    </location>
    <ligand>
        <name>IMP</name>
        <dbReference type="ChEBI" id="CHEBI:58053"/>
        <note>ligand shared between dimeric partners</note>
    </ligand>
</feature>
<feature type="binding site" evidence="2">
    <location>
        <begin position="455"/>
        <end position="461"/>
    </location>
    <ligand>
        <name>substrate</name>
    </ligand>
</feature>
<feature type="binding site" description="in other chain" evidence="2">
    <location>
        <position position="459"/>
    </location>
    <ligand>
        <name>IMP</name>
        <dbReference type="ChEBI" id="CHEBI:58053"/>
        <note>ligand shared between dimeric partners</note>
    </ligand>
</feature>
<feature type="binding site" evidence="2">
    <location>
        <position position="461"/>
    </location>
    <ligand>
        <name>GTP</name>
        <dbReference type="ChEBI" id="CHEBI:37565"/>
    </ligand>
</feature>
<feature type="binding site" evidence="2">
    <location>
        <begin position="589"/>
        <end position="591"/>
    </location>
    <ligand>
        <name>GTP</name>
        <dbReference type="ChEBI" id="CHEBI:37565"/>
    </ligand>
</feature>
<gene>
    <name type="ORF">TbgDal_XI4160</name>
</gene>
<name>PURA_TRYB9</name>
<protein>
    <recommendedName>
        <fullName evidence="2">Adenylosuccinate synthetase</fullName>
        <shortName evidence="2">AMPSase</shortName>
        <shortName evidence="2">AdSS</shortName>
        <ecNumber evidence="2">6.3.4.4</ecNumber>
    </recommendedName>
    <alternativeName>
        <fullName evidence="2">IMP--aspartate ligase</fullName>
    </alternativeName>
</protein>
<evidence type="ECO:0000250" key="1"/>
<evidence type="ECO:0000255" key="2">
    <source>
        <dbReference type="HAMAP-Rule" id="MF_03125"/>
    </source>
</evidence>
<sequence length="602" mass="66676">MAAAPSATAPKHNYTLGTNASQLELYKYLKTVPPIPELRQAVTIKKYEEASVDDTLYPLIDEHQIIMVVGAFFGDEGKGKTVDAVARHPACTCVARVNSGENAGHTVFDDIGRKYVFNLAPSSLLTPNTRNYVSSECVMDPISFMEREIGQFIKSNMPYKDKLFVGNVFVVTPYHKLLDLLGSAPNSSTLKGMSPIHASKVTKRGIRLDHIFNDEGVLRARLAKDMDTYYGLLKVKGLTDKDVVRRCEEENADGVERVPGYVVDFARAENKIDYLVKLYTERVKNNKDFPRRCDVTHELRAALARGEKLLLEGPQSYWLSNAREKFWESTTSADTTAGGLLASAQFNFQRYKVLVINVHKAPGSSRVGIGANPSSFVPQDYYSAQDIKTLEALPKGGCVDFDKIQNFFYTKAFNTESKTFNGIYEPLEYEDATGKYNIGVAMSIASARHHGECGAVTKKPRVCGFFDCVLHFEVNAVQGPYLSISAVDRGDDYDRIGITIAYVYYDVGNKMVDANGRVYKNGDIIKAGDPVPCEMALYHCYPIVKVINGWKGAPIAASKRRPNEPLPKGVCEFIANVEFFTGAKVISIGNGPRGSDIIYLKQ</sequence>
<keyword id="KW-0963">Cytoplasm</keyword>
<keyword id="KW-0342">GTP-binding</keyword>
<keyword id="KW-0436">Ligase</keyword>
<keyword id="KW-0460">Magnesium</keyword>
<keyword id="KW-0479">Metal-binding</keyword>
<keyword id="KW-0547">Nucleotide-binding</keyword>
<keyword id="KW-0658">Purine biosynthesis</keyword>
<proteinExistence type="inferred from homology"/>